<accession>Q11122</accession>
<name>KCNL3_CAEEL</name>
<protein>
    <recommendedName>
        <fullName>Small conductance calcium-activated potassium channel-like protein 3</fullName>
    </recommendedName>
</protein>
<reference key="1">
    <citation type="journal article" date="1998" name="Science">
        <title>Genome sequence of the nematode C. elegans: a platform for investigating biology.</title>
        <authorList>
            <consortium name="The C. elegans sequencing consortium"/>
        </authorList>
    </citation>
    <scope>NUCLEOTIDE SEQUENCE [LARGE SCALE GENOMIC DNA]</scope>
    <source>
        <strain>Bristol N2</strain>
    </source>
</reference>
<gene>
    <name type="primary">kcnl-3</name>
    <name type="ORF">C03F11.1</name>
</gene>
<dbReference type="EMBL" id="FO080310">
    <property type="protein sequence ID" value="CCD62774.2"/>
    <property type="molecule type" value="Genomic_DNA"/>
</dbReference>
<dbReference type="PIR" id="T15394">
    <property type="entry name" value="T15394"/>
</dbReference>
<dbReference type="RefSeq" id="NP_001367414.1">
    <property type="nucleotide sequence ID" value="NM_001380968.2"/>
</dbReference>
<dbReference type="RefSeq" id="NP_508917.2">
    <property type="nucleotide sequence ID" value="NM_076516.2"/>
</dbReference>
<dbReference type="SMR" id="Q11122"/>
<dbReference type="BioGRID" id="47025">
    <property type="interactions" value="2"/>
</dbReference>
<dbReference type="FunCoup" id="Q11122">
    <property type="interactions" value="6"/>
</dbReference>
<dbReference type="STRING" id="6239.C03F11.1.1"/>
<dbReference type="PaxDb" id="6239-C03F11.1"/>
<dbReference type="EnsemblMetazoa" id="C03F11.1.1">
    <property type="protein sequence ID" value="C03F11.1.1"/>
    <property type="gene ID" value="WBGene00015387"/>
</dbReference>
<dbReference type="GeneID" id="182164"/>
<dbReference type="UCSC" id="C03F11.1">
    <property type="organism name" value="c. elegans"/>
</dbReference>
<dbReference type="AGR" id="WB:WBGene00015387"/>
<dbReference type="WormBase" id="C03F11.1">
    <property type="protein sequence ID" value="CE47663"/>
    <property type="gene ID" value="WBGene00015387"/>
    <property type="gene designation" value="kcnl-3"/>
</dbReference>
<dbReference type="eggNOG" id="KOG3684">
    <property type="taxonomic scope" value="Eukaryota"/>
</dbReference>
<dbReference type="GeneTree" id="ENSGT00950000182904"/>
<dbReference type="HOGENOM" id="CLU_398089_0_0_1"/>
<dbReference type="InParanoid" id="Q11122"/>
<dbReference type="OMA" id="FVQCERY"/>
<dbReference type="OrthoDB" id="73653at2759"/>
<dbReference type="PhylomeDB" id="Q11122"/>
<dbReference type="Reactome" id="R-CEL-1296052">
    <property type="pathway name" value="Ca2+ activated K+ channels"/>
</dbReference>
<dbReference type="PRO" id="PR:Q11122"/>
<dbReference type="Proteomes" id="UP000001940">
    <property type="component" value="Chromosome X"/>
</dbReference>
<dbReference type="Bgee" id="WBGene00015387">
    <property type="expression patterns" value="Expressed in larva and 3 other cell types or tissues"/>
</dbReference>
<dbReference type="GO" id="GO:0043005">
    <property type="term" value="C:neuron projection"/>
    <property type="evidence" value="ECO:0000318"/>
    <property type="project" value="GO_Central"/>
</dbReference>
<dbReference type="GO" id="GO:0043025">
    <property type="term" value="C:neuronal cell body"/>
    <property type="evidence" value="ECO:0000318"/>
    <property type="project" value="GO_Central"/>
</dbReference>
<dbReference type="GO" id="GO:0005886">
    <property type="term" value="C:plasma membrane"/>
    <property type="evidence" value="ECO:0000318"/>
    <property type="project" value="GO_Central"/>
</dbReference>
<dbReference type="GO" id="GO:0005516">
    <property type="term" value="F:calmodulin binding"/>
    <property type="evidence" value="ECO:0000318"/>
    <property type="project" value="GO_Central"/>
</dbReference>
<dbReference type="GO" id="GO:0016286">
    <property type="term" value="F:small conductance calcium-activated potassium channel activity"/>
    <property type="evidence" value="ECO:0000318"/>
    <property type="project" value="GO_Central"/>
</dbReference>
<dbReference type="GO" id="GO:0071805">
    <property type="term" value="P:potassium ion transmembrane transport"/>
    <property type="evidence" value="ECO:0000318"/>
    <property type="project" value="GO_Central"/>
</dbReference>
<dbReference type="FunFam" id="1.10.287.70:FF:000250">
    <property type="entry name" value="Small conductance calcium-activated potassium channel-like protein 3"/>
    <property type="match status" value="1"/>
</dbReference>
<dbReference type="FunFam" id="1.10.287.70:FF:000313">
    <property type="entry name" value="Small conductance calcium-activated potassium channel-like protein 3"/>
    <property type="match status" value="1"/>
</dbReference>
<dbReference type="Gene3D" id="1.10.287.70">
    <property type="match status" value="2"/>
</dbReference>
<dbReference type="InterPro" id="IPR004178">
    <property type="entry name" value="CaM-bd_dom"/>
</dbReference>
<dbReference type="InterPro" id="IPR036122">
    <property type="entry name" value="CaM-bd_dom_sf"/>
</dbReference>
<dbReference type="InterPro" id="IPR015449">
    <property type="entry name" value="K_chnl_Ca-activ_SK"/>
</dbReference>
<dbReference type="InterPro" id="IPR013099">
    <property type="entry name" value="K_chnl_dom"/>
</dbReference>
<dbReference type="PANTHER" id="PTHR10153">
    <property type="entry name" value="SMALL CONDUCTANCE CALCIUM-ACTIVATED POTASSIUM CHANNEL"/>
    <property type="match status" value="1"/>
</dbReference>
<dbReference type="Pfam" id="PF02888">
    <property type="entry name" value="CaMBD"/>
    <property type="match status" value="1"/>
</dbReference>
<dbReference type="Pfam" id="PF07885">
    <property type="entry name" value="Ion_trans_2"/>
    <property type="match status" value="1"/>
</dbReference>
<dbReference type="Pfam" id="PF03530">
    <property type="entry name" value="SK_channel"/>
    <property type="match status" value="1"/>
</dbReference>
<dbReference type="SMART" id="SM01053">
    <property type="entry name" value="CaMBD"/>
    <property type="match status" value="1"/>
</dbReference>
<dbReference type="SUPFAM" id="SSF81327">
    <property type="entry name" value="Small-conductance potassium channel"/>
    <property type="match status" value="1"/>
</dbReference>
<dbReference type="SUPFAM" id="SSF81324">
    <property type="entry name" value="Voltage-gated potassium channels"/>
    <property type="match status" value="1"/>
</dbReference>
<comment type="function">
    <text evidence="1">Forms a voltage-independent potassium channel activated by intracellular calcium.</text>
</comment>
<comment type="subunit">
    <text evidence="1">Heterooligomer.</text>
</comment>
<comment type="subcellular location">
    <subcellularLocation>
        <location evidence="4">Membrane</location>
        <topology evidence="4">Multi-pass membrane protein</topology>
    </subcellularLocation>
</comment>
<comment type="similarity">
    <text evidence="4">Belongs to the potassium channel KCNN family. SK subfamily.</text>
</comment>
<proteinExistence type="inferred from homology"/>
<feature type="chain" id="PRO_0000065131" description="Small conductance calcium-activated potassium channel-like protein 3">
    <location>
        <begin position="1"/>
        <end position="692"/>
    </location>
</feature>
<feature type="transmembrane region" description="Helical; Name=Segment S1" evidence="2">
    <location>
        <begin position="270"/>
        <end position="290"/>
    </location>
</feature>
<feature type="transmembrane region" description="Helical; Name=Segment S2" evidence="2">
    <location>
        <begin position="313"/>
        <end position="333"/>
    </location>
</feature>
<feature type="transmembrane region" description="Helical; Name=Segment S3" evidence="2">
    <location>
        <begin position="349"/>
        <end position="369"/>
    </location>
</feature>
<feature type="transmembrane region" description="Helical; Name=Segment S4" evidence="2">
    <location>
        <begin position="401"/>
        <end position="421"/>
    </location>
</feature>
<feature type="transmembrane region" description="Helical; Name=Segment S5" evidence="2">
    <location>
        <begin position="455"/>
        <end position="475"/>
    </location>
</feature>
<feature type="intramembrane region" description="Pore-forming; Name=Segment H5" evidence="2">
    <location>
        <begin position="492"/>
        <end position="512"/>
    </location>
</feature>
<feature type="transmembrane region" description="Helical; Name=Segment S6" evidence="2">
    <location>
        <begin position="520"/>
        <end position="540"/>
    </location>
</feature>
<feature type="region of interest" description="Disordered" evidence="3">
    <location>
        <begin position="667"/>
        <end position="692"/>
    </location>
</feature>
<feature type="compositionally biased region" description="Polar residues" evidence="3">
    <location>
        <begin position="667"/>
        <end position="683"/>
    </location>
</feature>
<sequence length="692" mass="78817">MERPNSRLHCHPETHTYKCTVQPYFPLHTHATTVYGNVTKHRPSLGTLQAGDTLHARRFLSDKRRSYRNRSLGPTIASAPSVEQEDYRTPRPSFDSNGYVGKSFDFSSAQHGLTASESNALVKVSADFLRLNGSRQQFKNLLSARKKLGSLPPAYTRIDYSRESLDSHSARGIPNHHGPVITVEDTGSQLRINNIKPSVNQHLLESSCSFEKTMVTQCESNGSVTSHNTSSAFQRNNSRYGVPIDSTAVKQVYRVRSERLTNRVRITDRSLYLALFGVILMLVESEITAEKFYGVSKTHWISQSLRVGVTCSTIALLYHIILYHLNDIVLELVDCGADDWRVVVTTERVIQFCIEFICCGICPLPGSGEMKWTFIEPSLHKDGPSEERTVQTRNVDVPVDVILSCFMLCRSYLFARFMVLHSKQFQDASTRTLAALNRIQVNFSFVIKTSLDQQPVLFLTTFTFIFWIIMSWMFVQCERYGFSGKNPQSILYSNSLWFIAITFMLNGYGDIVPQTNAGRFIAIFVGVVGAVISSILIAVISRNILLSQGQRNVNNFMYDSKLAREHKEAAARVLQHTWHIHKCLQGSDGGNRRLRTYQRKFLKAIHKFRSVKSEMREFSENNSQNNPQMTRLVTDMHTSMQRLLNVQDEMRMQIEVLQQSVRNHYMHSTPNVPHLQGLTSSPVPSDRYDNRF</sequence>
<evidence type="ECO:0000250" key="1"/>
<evidence type="ECO:0000255" key="2"/>
<evidence type="ECO:0000256" key="3">
    <source>
        <dbReference type="SAM" id="MobiDB-lite"/>
    </source>
</evidence>
<evidence type="ECO:0000305" key="4"/>
<organism>
    <name type="scientific">Caenorhabditis elegans</name>
    <dbReference type="NCBI Taxonomy" id="6239"/>
    <lineage>
        <taxon>Eukaryota</taxon>
        <taxon>Metazoa</taxon>
        <taxon>Ecdysozoa</taxon>
        <taxon>Nematoda</taxon>
        <taxon>Chromadorea</taxon>
        <taxon>Rhabditida</taxon>
        <taxon>Rhabditina</taxon>
        <taxon>Rhabditomorpha</taxon>
        <taxon>Rhabditoidea</taxon>
        <taxon>Rhabditidae</taxon>
        <taxon>Peloderinae</taxon>
        <taxon>Caenorhabditis</taxon>
    </lineage>
</organism>
<keyword id="KW-0407">Ion channel</keyword>
<keyword id="KW-0406">Ion transport</keyword>
<keyword id="KW-0472">Membrane</keyword>
<keyword id="KW-1185">Reference proteome</keyword>
<keyword id="KW-0812">Transmembrane</keyword>
<keyword id="KW-1133">Transmembrane helix</keyword>
<keyword id="KW-0813">Transport</keyword>